<proteinExistence type="evidence at protein level"/>
<protein>
    <recommendedName>
        <fullName evidence="7">Protein EOLA1</fullName>
    </recommendedName>
    <alternativeName>
        <fullName evidence="6">Endothelial-overexpressed lipopolysaccharide-associated factor 1</fullName>
    </alternativeName>
    <alternativeName>
        <fullName evidence="8">Endothelium and lymphocyte associated ASCH domain 1</fullName>
    </alternativeName>
</protein>
<accession>Q8TE69</accession>
<accession>A0A0A0MTB5</accession>
<accession>A8K784</accession>
<accession>B7Z6H6</accession>
<accession>B7ZL96</accession>
<accession>D6RA72</accession>
<accession>E7ENU3</accession>
<accession>Q2M3E9</accession>
<feature type="chain" id="PRO_0000079740" description="Protein EOLA1">
    <location>
        <begin position="1"/>
        <end position="158"/>
    </location>
</feature>
<feature type="domain" description="ASCH" evidence="1">
    <location>
        <begin position="6"/>
        <end position="92"/>
    </location>
</feature>
<feature type="splice variant" id="VSP_047240" description="In isoform 2." evidence="5">
    <original>VDIPEHLIPLGHEV</original>
    <variation>NP</variation>
    <location>
        <begin position="145"/>
        <end position="158"/>
    </location>
</feature>
<feature type="sequence conflict" description="In Ref. 3; BAH13262." evidence="7" ref="3">
    <original>K</original>
    <variation>E</variation>
    <location>
        <position position="2"/>
    </location>
</feature>
<feature type="sequence conflict" description="In Ref. 3; BAH13262." evidence="7" ref="3">
    <original>S</original>
    <variation>P</variation>
    <location>
        <position position="7"/>
    </location>
</feature>
<feature type="strand" evidence="10">
    <location>
        <begin position="1"/>
        <end position="8"/>
    </location>
</feature>
<feature type="helix" evidence="10">
    <location>
        <begin position="12"/>
        <end position="17"/>
    </location>
</feature>
<feature type="strand" evidence="10">
    <location>
        <begin position="23"/>
        <end position="28"/>
    </location>
</feature>
<feature type="helix" evidence="10">
    <location>
        <begin position="32"/>
        <end position="34"/>
    </location>
</feature>
<feature type="strand" evidence="10">
    <location>
        <begin position="37"/>
        <end position="43"/>
    </location>
</feature>
<feature type="helix" evidence="10">
    <location>
        <begin position="52"/>
        <end position="59"/>
    </location>
</feature>
<feature type="helix" evidence="10">
    <location>
        <begin position="65"/>
        <end position="75"/>
    </location>
</feature>
<feature type="turn" evidence="10">
    <location>
        <begin position="76"/>
        <end position="78"/>
    </location>
</feature>
<feature type="strand" evidence="10">
    <location>
        <begin position="80"/>
        <end position="94"/>
    </location>
</feature>
<feature type="helix" evidence="10">
    <location>
        <begin position="101"/>
        <end position="111"/>
    </location>
</feature>
<feature type="strand" evidence="10">
    <location>
        <begin position="120"/>
        <end position="135"/>
    </location>
</feature>
<feature type="strand" evidence="10">
    <location>
        <begin position="140"/>
        <end position="147"/>
    </location>
</feature>
<feature type="helix" evidence="10">
    <location>
        <begin position="149"/>
        <end position="151"/>
    </location>
</feature>
<organism>
    <name type="scientific">Homo sapiens</name>
    <name type="common">Human</name>
    <dbReference type="NCBI Taxonomy" id="9606"/>
    <lineage>
        <taxon>Eukaryota</taxon>
        <taxon>Metazoa</taxon>
        <taxon>Chordata</taxon>
        <taxon>Craniata</taxon>
        <taxon>Vertebrata</taxon>
        <taxon>Euteleostomi</taxon>
        <taxon>Mammalia</taxon>
        <taxon>Eutheria</taxon>
        <taxon>Euarchontoglires</taxon>
        <taxon>Primates</taxon>
        <taxon>Haplorrhini</taxon>
        <taxon>Catarrhini</taxon>
        <taxon>Hominidae</taxon>
        <taxon>Homo</taxon>
    </lineage>
</organism>
<dbReference type="EMBL" id="L43580">
    <property type="status" value="NOT_ANNOTATED_CDS"/>
    <property type="molecule type" value="mRNA"/>
</dbReference>
<dbReference type="EMBL" id="AY074889">
    <property type="protein sequence ID" value="AAL71889.1"/>
    <property type="molecule type" value="mRNA"/>
</dbReference>
<dbReference type="EMBL" id="AC244197">
    <property type="status" value="NOT_ANNOTATED_CDS"/>
    <property type="molecule type" value="Genomic_DNA"/>
</dbReference>
<dbReference type="EMBL" id="AK291899">
    <property type="protein sequence ID" value="BAF84588.1"/>
    <property type="molecule type" value="mRNA"/>
</dbReference>
<dbReference type="EMBL" id="AK300334">
    <property type="protein sequence ID" value="BAH13262.1"/>
    <property type="molecule type" value="mRNA"/>
</dbReference>
<dbReference type="EMBL" id="BC065539">
    <property type="protein sequence ID" value="AAH65539.1"/>
    <property type="molecule type" value="mRNA"/>
</dbReference>
<dbReference type="EMBL" id="BC104930">
    <property type="protein sequence ID" value="AAI04931.1"/>
    <property type="molecule type" value="mRNA"/>
</dbReference>
<dbReference type="EMBL" id="BC104932">
    <property type="protein sequence ID" value="AAI04933.1"/>
    <property type="molecule type" value="mRNA"/>
</dbReference>
<dbReference type="EMBL" id="BC143660">
    <property type="protein sequence ID" value="AAI43661.1"/>
    <property type="molecule type" value="mRNA"/>
</dbReference>
<dbReference type="EMBL" id="BC143661">
    <property type="protein sequence ID" value="AAI43662.1"/>
    <property type="molecule type" value="mRNA"/>
</dbReference>
<dbReference type="EMBL" id="BC143662">
    <property type="protein sequence ID" value="AAI43663.1"/>
    <property type="molecule type" value="mRNA"/>
</dbReference>
<dbReference type="CCDS" id="CCDS14687.1">
    <molecule id="Q8TE69-1"/>
</dbReference>
<dbReference type="CCDS" id="CCDS55522.1">
    <molecule id="Q8TE69-2"/>
</dbReference>
<dbReference type="RefSeq" id="NP_001165378.1">
    <molecule id="Q8TE69-1"/>
    <property type="nucleotide sequence ID" value="NM_001171907.3"/>
</dbReference>
<dbReference type="RefSeq" id="NP_001165379.1">
    <molecule id="Q8TE69-1"/>
    <property type="nucleotide sequence ID" value="NM_001171908.3"/>
</dbReference>
<dbReference type="RefSeq" id="NP_001165380.1">
    <molecule id="Q8TE69-2"/>
    <property type="nucleotide sequence ID" value="NM_001171909.4"/>
</dbReference>
<dbReference type="RefSeq" id="NP_001311203.1">
    <molecule id="Q8TE69-1"/>
    <property type="nucleotide sequence ID" value="NM_001324274.2"/>
</dbReference>
<dbReference type="RefSeq" id="NP_001311204.1">
    <molecule id="Q8TE69-1"/>
    <property type="nucleotide sequence ID" value="NM_001324275.2"/>
</dbReference>
<dbReference type="RefSeq" id="NP_001311205.1">
    <molecule id="Q8TE69-2"/>
    <property type="nucleotide sequence ID" value="NM_001324276.2"/>
</dbReference>
<dbReference type="RefSeq" id="NP_001311206.1">
    <molecule id="Q8TE69-1"/>
    <property type="nucleotide sequence ID" value="NM_001324277.2"/>
</dbReference>
<dbReference type="RefSeq" id="NP_001311207.1">
    <molecule id="Q8TE69-1"/>
    <property type="nucleotide sequence ID" value="NM_001324278.2"/>
</dbReference>
<dbReference type="RefSeq" id="NP_001311208.1">
    <molecule id="Q8TE69-2"/>
    <property type="nucleotide sequence ID" value="NM_001324279.2"/>
</dbReference>
<dbReference type="RefSeq" id="NP_001311209.1">
    <molecule id="Q8TE69-1"/>
    <property type="nucleotide sequence ID" value="NM_001324280.2"/>
</dbReference>
<dbReference type="RefSeq" id="NP_835225.2">
    <molecule id="Q8TE69-1"/>
    <property type="nucleotide sequence ID" value="NM_178124.5"/>
</dbReference>
<dbReference type="RefSeq" id="XP_005262406.2">
    <property type="nucleotide sequence ID" value="XM_005262349.4"/>
</dbReference>
<dbReference type="PDB" id="5Y7D">
    <property type="method" value="X-ray"/>
    <property type="resolution" value="1.71 A"/>
    <property type="chains" value="A=1-158"/>
</dbReference>
<dbReference type="PDBsum" id="5Y7D"/>
<dbReference type="SMR" id="Q8TE69"/>
<dbReference type="BioGRID" id="124897">
    <property type="interactions" value="6"/>
</dbReference>
<dbReference type="FunCoup" id="Q8TE69">
    <property type="interactions" value="19"/>
</dbReference>
<dbReference type="IntAct" id="Q8TE69">
    <property type="interactions" value="6"/>
</dbReference>
<dbReference type="STRING" id="9606.ENSP00000423099"/>
<dbReference type="BioMuta" id="CXorf40A"/>
<dbReference type="DMDM" id="519668664"/>
<dbReference type="jPOST" id="Q8TE69"/>
<dbReference type="MassIVE" id="Q8TE69"/>
<dbReference type="PaxDb" id="9606-ENSP00000423099"/>
<dbReference type="PeptideAtlas" id="Q8TE69"/>
<dbReference type="Pumba" id="Q8TE69"/>
<dbReference type="Antibodypedia" id="55906">
    <property type="antibodies" value="37 antibodies from 10 providers"/>
</dbReference>
<dbReference type="DNASU" id="91966"/>
<dbReference type="Ensembl" id="ENST00000359293.5">
    <molecule id="Q8TE69-1"/>
    <property type="protein sequence ID" value="ENSP00000420882.1"/>
    <property type="gene ID" value="ENSG00000197620.11"/>
</dbReference>
<dbReference type="Ensembl" id="ENST00000393985.8">
    <molecule id="Q8TE69-1"/>
    <property type="protein sequence ID" value="ENSP00000421745.1"/>
    <property type="gene ID" value="ENSG00000197620.11"/>
</dbReference>
<dbReference type="Ensembl" id="ENST00000422892.2">
    <molecule id="Q8TE69-2"/>
    <property type="protein sequence ID" value="ENSP00000422312.1"/>
    <property type="gene ID" value="ENSG00000197620.11"/>
</dbReference>
<dbReference type="Ensembl" id="ENST00000423421.5">
    <molecule id="Q8TE69-1"/>
    <property type="protein sequence ID" value="ENSP00000422512.1"/>
    <property type="gene ID" value="ENSG00000197620.11"/>
</dbReference>
<dbReference type="Ensembl" id="ENST00000423540.6">
    <molecule id="Q8TE69-1"/>
    <property type="protein sequence ID" value="ENSP00000425520.1"/>
    <property type="gene ID" value="ENSG00000197620.11"/>
</dbReference>
<dbReference type="Ensembl" id="ENST00000434353.6">
    <molecule id="Q8TE69-2"/>
    <property type="protein sequence ID" value="ENSP00000423160.1"/>
    <property type="gene ID" value="ENSG00000197620.11"/>
</dbReference>
<dbReference type="Ensembl" id="ENST00000441248.5">
    <molecule id="Q8TE69-1"/>
    <property type="protein sequence ID" value="ENSP00000423099.1"/>
    <property type="gene ID" value="ENSG00000197620.11"/>
</dbReference>
<dbReference type="Ensembl" id="ENST00000450602.6">
    <molecule id="Q8TE69-1"/>
    <property type="protein sequence ID" value="ENSP00000427540.1"/>
    <property type="gene ID" value="ENSG00000197620.11"/>
</dbReference>
<dbReference type="Ensembl" id="ENST00000514208.5">
    <molecule id="Q8TE69-2"/>
    <property type="protein sequence ID" value="ENSP00000423708.1"/>
    <property type="gene ID" value="ENSG00000197620.11"/>
</dbReference>
<dbReference type="GeneID" id="91966"/>
<dbReference type="KEGG" id="hsa:91966"/>
<dbReference type="MANE-Select" id="ENST00000393985.8">
    <property type="protein sequence ID" value="ENSP00000421745.1"/>
    <property type="RefSeq nucleotide sequence ID" value="NM_001171907.3"/>
    <property type="RefSeq protein sequence ID" value="NP_001165378.1"/>
</dbReference>
<dbReference type="UCSC" id="uc022cgi.2">
    <property type="organism name" value="human"/>
</dbReference>
<dbReference type="UCSC" id="uc033ezo.2">
    <molecule id="Q8TE69-1"/>
    <property type="organism name" value="human"/>
</dbReference>
<dbReference type="AGR" id="HGNC:28089"/>
<dbReference type="CTD" id="91966"/>
<dbReference type="DisGeNET" id="91966"/>
<dbReference type="GeneCards" id="EOLA1"/>
<dbReference type="HGNC" id="HGNC:28089">
    <property type="gene designation" value="EOLA1"/>
</dbReference>
<dbReference type="HPA" id="ENSG00000197620">
    <property type="expression patterns" value="Low tissue specificity"/>
</dbReference>
<dbReference type="MIM" id="300954">
    <property type="type" value="gene"/>
</dbReference>
<dbReference type="neXtProt" id="NX_Q8TE69"/>
<dbReference type="OpenTargets" id="ENSG00000197620"/>
<dbReference type="VEuPathDB" id="HostDB:ENSG00000197620"/>
<dbReference type="eggNOG" id="ENOG502RZ9S">
    <property type="taxonomic scope" value="Eukaryota"/>
</dbReference>
<dbReference type="GeneTree" id="ENSGT00390000012182"/>
<dbReference type="HOGENOM" id="CLU_116791_0_0_1"/>
<dbReference type="InParanoid" id="Q8TE69"/>
<dbReference type="OMA" id="HVAQRDW"/>
<dbReference type="OrthoDB" id="2865258at2759"/>
<dbReference type="PAN-GO" id="Q8TE69">
    <property type="GO annotations" value="0 GO annotations based on evolutionary models"/>
</dbReference>
<dbReference type="PhylomeDB" id="Q8TE69"/>
<dbReference type="TreeFam" id="TF332845"/>
<dbReference type="PathwayCommons" id="Q8TE69"/>
<dbReference type="SignaLink" id="Q8TE69"/>
<dbReference type="BioGRID-ORCS" id="91966">
    <property type="hits" value="16 hits in 670 CRISPR screens"/>
</dbReference>
<dbReference type="ChiTaRS" id="CXorf40A">
    <property type="organism name" value="human"/>
</dbReference>
<dbReference type="GeneWiki" id="CXorf40A"/>
<dbReference type="GenomeRNAi" id="91966"/>
<dbReference type="Pharos" id="Q8TE69">
    <property type="development level" value="Tbio"/>
</dbReference>
<dbReference type="PRO" id="PR:Q8TE69"/>
<dbReference type="Proteomes" id="UP000005640">
    <property type="component" value="Chromosome X"/>
</dbReference>
<dbReference type="RNAct" id="Q8TE69">
    <property type="molecule type" value="protein"/>
</dbReference>
<dbReference type="Bgee" id="ENSG00000197620">
    <property type="expression patterns" value="Expressed in apex of heart and 96 other cell types or tissues"/>
</dbReference>
<dbReference type="ExpressionAtlas" id="Q8TE69">
    <property type="expression patterns" value="baseline and differential"/>
</dbReference>
<dbReference type="GO" id="GO:0005739">
    <property type="term" value="C:mitochondrion"/>
    <property type="evidence" value="ECO:0006056"/>
    <property type="project" value="FlyBase"/>
</dbReference>
<dbReference type="GO" id="GO:0010468">
    <property type="term" value="P:regulation of gene expression"/>
    <property type="evidence" value="ECO:0000314"/>
    <property type="project" value="UniProtKB"/>
</dbReference>
<dbReference type="GO" id="GO:0032675">
    <property type="term" value="P:regulation of interleukin-6 production"/>
    <property type="evidence" value="ECO:0000314"/>
    <property type="project" value="UniProtKB"/>
</dbReference>
<dbReference type="InterPro" id="IPR007374">
    <property type="entry name" value="ASCH_domain"/>
</dbReference>
<dbReference type="InterPro" id="IPR033615">
    <property type="entry name" value="EOLA1/EOLA2"/>
</dbReference>
<dbReference type="InterPro" id="IPR015947">
    <property type="entry name" value="PUA-like_sf"/>
</dbReference>
<dbReference type="PANTHER" id="PTHR31666">
    <property type="entry name" value="PROTEIN CXORF40A-RELATED"/>
    <property type="match status" value="1"/>
</dbReference>
<dbReference type="PANTHER" id="PTHR31666:SF0">
    <property type="entry name" value="PROTEIN EOLA1-RELATED"/>
    <property type="match status" value="1"/>
</dbReference>
<dbReference type="SMART" id="SM01022">
    <property type="entry name" value="ASCH"/>
    <property type="match status" value="1"/>
</dbReference>
<dbReference type="SUPFAM" id="SSF88697">
    <property type="entry name" value="PUA domain-like"/>
    <property type="match status" value="1"/>
</dbReference>
<comment type="function">
    <text evidence="3">May play a role in cell protection during the inflammatory response. In epithelial cells, negatively regulates IL6 production and apoptosis through the regulation of MT2A expression (PubMed:24916366).</text>
</comment>
<comment type="subunit">
    <text evidence="2">Interacts with MT2A.</text>
</comment>
<comment type="interaction">
    <interactant intactId="EBI-996609">
        <id>Q8TE69</id>
    </interactant>
    <interactant intactId="EBI-996616">
        <id>P02795</id>
        <label>MT2A</label>
    </interactant>
    <organismsDiffer>false</organismsDiffer>
    <experiments>2</experiments>
</comment>
<comment type="alternative products">
    <event type="alternative splicing"/>
    <isoform>
        <id>Q8TE69-1</id>
        <name>1</name>
        <sequence type="displayed"/>
    </isoform>
    <isoform>
        <id>Q8TE69-2</id>
        <name>2</name>
        <sequence type="described" ref="VSP_047240"/>
    </isoform>
</comment>
<comment type="tissue specificity">
    <text evidence="2 4">Expressed primarily in heart, skeletal muscle, kidney, liver and placenta. Relatively high level of expression in spleen, colon and small intestine. Almost no expression in brain, thymus, lung and peripheral blood leukocytes. Expressed in epithelial cells (at protein level) (PubMed:31007603).</text>
</comment>
<comment type="induction">
    <text evidence="3">Induced by LPS (at protein level).</text>
</comment>
<comment type="similarity">
    <text evidence="7">Belongs to the EOLA family.</text>
</comment>
<name>EOLA1_HUMAN</name>
<sequence length="158" mass="17891">MKFGCLSFRQPYAGFVLNGIKTVETRWRPLLSSQRNCTIAVHIAHRDWEGDAWRELLVERLGMTPAQIQALLRKGEKFGRGVIAGLVDIGETLQCPEDLTPDEVVELENQAVLTNLKQKYLTVISNPRWLLEPIPRKGGKDVFQVDIPEHLIPLGHEV</sequence>
<keyword id="KW-0002">3D-structure</keyword>
<keyword id="KW-0025">Alternative splicing</keyword>
<keyword id="KW-1267">Proteomics identification</keyword>
<keyword id="KW-1185">Reference proteome</keyword>
<gene>
    <name evidence="8" type="primary">EOLA1</name>
    <name type="synonym">CXorf40</name>
    <name type="synonym">CXorf40A</name>
</gene>
<reference key="1">
    <citation type="journal article" date="1995" name="Genome Res.">
        <title>130 kb of DNA sequence reveals two new genes and a regional duplication distal to the human iduronate-2-sulfate sulfatase locus.</title>
        <authorList>
            <person name="Timms K.M."/>
            <person name="Lu F."/>
            <person name="Shen Y."/>
            <person name="Pierson C.A."/>
            <person name="Muzny D.M."/>
            <person name="Gu Y."/>
            <person name="Nelson D.L."/>
            <person name="Gibbs R.A."/>
        </authorList>
    </citation>
    <scope>NUCLEOTIDE SEQUENCE [MRNA] (ISOFORM 1)</scope>
</reference>
<reference key="2">
    <citation type="journal article" date="2004" name="Biochem. Biophys. Res. Commun.">
        <title>Identification and characterization of a novel gene EOLA1 stimulating ECV304 cell proliferation.</title>
        <authorList>
            <person name="Liang Z."/>
            <person name="Yang Z."/>
        </authorList>
    </citation>
    <scope>NUCLEOTIDE SEQUENCE [MRNA] (ISOFORM 1)</scope>
    <scope>TISSUE SPECIFICITY</scope>
    <scope>INTERACTION WITH MT2A</scope>
</reference>
<reference key="3">
    <citation type="journal article" date="2004" name="Nat. Genet.">
        <title>Complete sequencing and characterization of 21,243 full-length human cDNAs.</title>
        <authorList>
            <person name="Ota T."/>
            <person name="Suzuki Y."/>
            <person name="Nishikawa T."/>
            <person name="Otsuki T."/>
            <person name="Sugiyama T."/>
            <person name="Irie R."/>
            <person name="Wakamatsu A."/>
            <person name="Hayashi K."/>
            <person name="Sato H."/>
            <person name="Nagai K."/>
            <person name="Kimura K."/>
            <person name="Makita H."/>
            <person name="Sekine M."/>
            <person name="Obayashi M."/>
            <person name="Nishi T."/>
            <person name="Shibahara T."/>
            <person name="Tanaka T."/>
            <person name="Ishii S."/>
            <person name="Yamamoto J."/>
            <person name="Saito K."/>
            <person name="Kawai Y."/>
            <person name="Isono Y."/>
            <person name="Nakamura Y."/>
            <person name="Nagahari K."/>
            <person name="Murakami K."/>
            <person name="Yasuda T."/>
            <person name="Iwayanagi T."/>
            <person name="Wagatsuma M."/>
            <person name="Shiratori A."/>
            <person name="Sudo H."/>
            <person name="Hosoiri T."/>
            <person name="Kaku Y."/>
            <person name="Kodaira H."/>
            <person name="Kondo H."/>
            <person name="Sugawara M."/>
            <person name="Takahashi M."/>
            <person name="Kanda K."/>
            <person name="Yokoi T."/>
            <person name="Furuya T."/>
            <person name="Kikkawa E."/>
            <person name="Omura Y."/>
            <person name="Abe K."/>
            <person name="Kamihara K."/>
            <person name="Katsuta N."/>
            <person name="Sato K."/>
            <person name="Tanikawa M."/>
            <person name="Yamazaki M."/>
            <person name="Ninomiya K."/>
            <person name="Ishibashi T."/>
            <person name="Yamashita H."/>
            <person name="Murakawa K."/>
            <person name="Fujimori K."/>
            <person name="Tanai H."/>
            <person name="Kimata M."/>
            <person name="Watanabe M."/>
            <person name="Hiraoka S."/>
            <person name="Chiba Y."/>
            <person name="Ishida S."/>
            <person name="Ono Y."/>
            <person name="Takiguchi S."/>
            <person name="Watanabe S."/>
            <person name="Yosida M."/>
            <person name="Hotuta T."/>
            <person name="Kusano J."/>
            <person name="Kanehori K."/>
            <person name="Takahashi-Fujii A."/>
            <person name="Hara H."/>
            <person name="Tanase T.-O."/>
            <person name="Nomura Y."/>
            <person name="Togiya S."/>
            <person name="Komai F."/>
            <person name="Hara R."/>
            <person name="Takeuchi K."/>
            <person name="Arita M."/>
            <person name="Imose N."/>
            <person name="Musashino K."/>
            <person name="Yuuki H."/>
            <person name="Oshima A."/>
            <person name="Sasaki N."/>
            <person name="Aotsuka S."/>
            <person name="Yoshikawa Y."/>
            <person name="Matsunawa H."/>
            <person name="Ichihara T."/>
            <person name="Shiohata N."/>
            <person name="Sano S."/>
            <person name="Moriya S."/>
            <person name="Momiyama H."/>
            <person name="Satoh N."/>
            <person name="Takami S."/>
            <person name="Terashima Y."/>
            <person name="Suzuki O."/>
            <person name="Nakagawa S."/>
            <person name="Senoh A."/>
            <person name="Mizoguchi H."/>
            <person name="Goto Y."/>
            <person name="Shimizu F."/>
            <person name="Wakebe H."/>
            <person name="Hishigaki H."/>
            <person name="Watanabe T."/>
            <person name="Sugiyama A."/>
            <person name="Takemoto M."/>
            <person name="Kawakami B."/>
            <person name="Yamazaki M."/>
            <person name="Watanabe K."/>
            <person name="Kumagai A."/>
            <person name="Itakura S."/>
            <person name="Fukuzumi Y."/>
            <person name="Fujimori Y."/>
            <person name="Komiyama M."/>
            <person name="Tashiro H."/>
            <person name="Tanigami A."/>
            <person name="Fujiwara T."/>
            <person name="Ono T."/>
            <person name="Yamada K."/>
            <person name="Fujii Y."/>
            <person name="Ozaki K."/>
            <person name="Hirao M."/>
            <person name="Ohmori Y."/>
            <person name="Kawabata A."/>
            <person name="Hikiji T."/>
            <person name="Kobatake N."/>
            <person name="Inagaki H."/>
            <person name="Ikema Y."/>
            <person name="Okamoto S."/>
            <person name="Okitani R."/>
            <person name="Kawakami T."/>
            <person name="Noguchi S."/>
            <person name="Itoh T."/>
            <person name="Shigeta K."/>
            <person name="Senba T."/>
            <person name="Matsumura K."/>
            <person name="Nakajima Y."/>
            <person name="Mizuno T."/>
            <person name="Morinaga M."/>
            <person name="Sasaki M."/>
            <person name="Togashi T."/>
            <person name="Oyama M."/>
            <person name="Hata H."/>
            <person name="Watanabe M."/>
            <person name="Komatsu T."/>
            <person name="Mizushima-Sugano J."/>
            <person name="Satoh T."/>
            <person name="Shirai Y."/>
            <person name="Takahashi Y."/>
            <person name="Nakagawa K."/>
            <person name="Okumura K."/>
            <person name="Nagase T."/>
            <person name="Nomura N."/>
            <person name="Kikuchi H."/>
            <person name="Masuho Y."/>
            <person name="Yamashita R."/>
            <person name="Nakai K."/>
            <person name="Yada T."/>
            <person name="Nakamura Y."/>
            <person name="Ohara O."/>
            <person name="Isogai T."/>
            <person name="Sugano S."/>
        </authorList>
    </citation>
    <scope>NUCLEOTIDE SEQUENCE [LARGE SCALE MRNA] (ISOFORMS 1 AND 2)</scope>
    <source>
        <tissue>Placenta</tissue>
        <tissue>Skeletal muscle</tissue>
    </source>
</reference>
<reference key="4">
    <citation type="journal article" date="2005" name="Nature">
        <title>The DNA sequence of the human X chromosome.</title>
        <authorList>
            <person name="Ross M.T."/>
            <person name="Grafham D.V."/>
            <person name="Coffey A.J."/>
            <person name="Scherer S."/>
            <person name="McLay K."/>
            <person name="Muzny D."/>
            <person name="Platzer M."/>
            <person name="Howell G.R."/>
            <person name="Burrows C."/>
            <person name="Bird C.P."/>
            <person name="Frankish A."/>
            <person name="Lovell F.L."/>
            <person name="Howe K.L."/>
            <person name="Ashurst J.L."/>
            <person name="Fulton R.S."/>
            <person name="Sudbrak R."/>
            <person name="Wen G."/>
            <person name="Jones M.C."/>
            <person name="Hurles M.E."/>
            <person name="Andrews T.D."/>
            <person name="Scott C.E."/>
            <person name="Searle S."/>
            <person name="Ramser J."/>
            <person name="Whittaker A."/>
            <person name="Deadman R."/>
            <person name="Carter N.P."/>
            <person name="Hunt S.E."/>
            <person name="Chen R."/>
            <person name="Cree A."/>
            <person name="Gunaratne P."/>
            <person name="Havlak P."/>
            <person name="Hodgson A."/>
            <person name="Metzker M.L."/>
            <person name="Richards S."/>
            <person name="Scott G."/>
            <person name="Steffen D."/>
            <person name="Sodergren E."/>
            <person name="Wheeler D.A."/>
            <person name="Worley K.C."/>
            <person name="Ainscough R."/>
            <person name="Ambrose K.D."/>
            <person name="Ansari-Lari M.A."/>
            <person name="Aradhya S."/>
            <person name="Ashwell R.I."/>
            <person name="Babbage A.K."/>
            <person name="Bagguley C.L."/>
            <person name="Ballabio A."/>
            <person name="Banerjee R."/>
            <person name="Barker G.E."/>
            <person name="Barlow K.F."/>
            <person name="Barrett I.P."/>
            <person name="Bates K.N."/>
            <person name="Beare D.M."/>
            <person name="Beasley H."/>
            <person name="Beasley O."/>
            <person name="Beck A."/>
            <person name="Bethel G."/>
            <person name="Blechschmidt K."/>
            <person name="Brady N."/>
            <person name="Bray-Allen S."/>
            <person name="Bridgeman A.M."/>
            <person name="Brown A.J."/>
            <person name="Brown M.J."/>
            <person name="Bonnin D."/>
            <person name="Bruford E.A."/>
            <person name="Buhay C."/>
            <person name="Burch P."/>
            <person name="Burford D."/>
            <person name="Burgess J."/>
            <person name="Burrill W."/>
            <person name="Burton J."/>
            <person name="Bye J.M."/>
            <person name="Carder C."/>
            <person name="Carrel L."/>
            <person name="Chako J."/>
            <person name="Chapman J.C."/>
            <person name="Chavez D."/>
            <person name="Chen E."/>
            <person name="Chen G."/>
            <person name="Chen Y."/>
            <person name="Chen Z."/>
            <person name="Chinault C."/>
            <person name="Ciccodicola A."/>
            <person name="Clark S.Y."/>
            <person name="Clarke G."/>
            <person name="Clee C.M."/>
            <person name="Clegg S."/>
            <person name="Clerc-Blankenburg K."/>
            <person name="Clifford K."/>
            <person name="Cobley V."/>
            <person name="Cole C.G."/>
            <person name="Conquer J.S."/>
            <person name="Corby N."/>
            <person name="Connor R.E."/>
            <person name="David R."/>
            <person name="Davies J."/>
            <person name="Davis C."/>
            <person name="Davis J."/>
            <person name="Delgado O."/>
            <person name="Deshazo D."/>
            <person name="Dhami P."/>
            <person name="Ding Y."/>
            <person name="Dinh H."/>
            <person name="Dodsworth S."/>
            <person name="Draper H."/>
            <person name="Dugan-Rocha S."/>
            <person name="Dunham A."/>
            <person name="Dunn M."/>
            <person name="Durbin K.J."/>
            <person name="Dutta I."/>
            <person name="Eades T."/>
            <person name="Ellwood M."/>
            <person name="Emery-Cohen A."/>
            <person name="Errington H."/>
            <person name="Evans K.L."/>
            <person name="Faulkner L."/>
            <person name="Francis F."/>
            <person name="Frankland J."/>
            <person name="Fraser A.E."/>
            <person name="Galgoczy P."/>
            <person name="Gilbert J."/>
            <person name="Gill R."/>
            <person name="Gloeckner G."/>
            <person name="Gregory S.G."/>
            <person name="Gribble S."/>
            <person name="Griffiths C."/>
            <person name="Grocock R."/>
            <person name="Gu Y."/>
            <person name="Gwilliam R."/>
            <person name="Hamilton C."/>
            <person name="Hart E.A."/>
            <person name="Hawes A."/>
            <person name="Heath P.D."/>
            <person name="Heitmann K."/>
            <person name="Hennig S."/>
            <person name="Hernandez J."/>
            <person name="Hinzmann B."/>
            <person name="Ho S."/>
            <person name="Hoffs M."/>
            <person name="Howden P.J."/>
            <person name="Huckle E.J."/>
            <person name="Hume J."/>
            <person name="Hunt P.J."/>
            <person name="Hunt A.R."/>
            <person name="Isherwood J."/>
            <person name="Jacob L."/>
            <person name="Johnson D."/>
            <person name="Jones S."/>
            <person name="de Jong P.J."/>
            <person name="Joseph S.S."/>
            <person name="Keenan S."/>
            <person name="Kelly S."/>
            <person name="Kershaw J.K."/>
            <person name="Khan Z."/>
            <person name="Kioschis P."/>
            <person name="Klages S."/>
            <person name="Knights A.J."/>
            <person name="Kosiura A."/>
            <person name="Kovar-Smith C."/>
            <person name="Laird G.K."/>
            <person name="Langford C."/>
            <person name="Lawlor S."/>
            <person name="Leversha M."/>
            <person name="Lewis L."/>
            <person name="Liu W."/>
            <person name="Lloyd C."/>
            <person name="Lloyd D.M."/>
            <person name="Loulseged H."/>
            <person name="Loveland J.E."/>
            <person name="Lovell J.D."/>
            <person name="Lozado R."/>
            <person name="Lu J."/>
            <person name="Lyne R."/>
            <person name="Ma J."/>
            <person name="Maheshwari M."/>
            <person name="Matthews L.H."/>
            <person name="McDowall J."/>
            <person name="McLaren S."/>
            <person name="McMurray A."/>
            <person name="Meidl P."/>
            <person name="Meitinger T."/>
            <person name="Milne S."/>
            <person name="Miner G."/>
            <person name="Mistry S.L."/>
            <person name="Morgan M."/>
            <person name="Morris S."/>
            <person name="Mueller I."/>
            <person name="Mullikin J.C."/>
            <person name="Nguyen N."/>
            <person name="Nordsiek G."/>
            <person name="Nyakatura G."/>
            <person name="O'dell C.N."/>
            <person name="Okwuonu G."/>
            <person name="Palmer S."/>
            <person name="Pandian R."/>
            <person name="Parker D."/>
            <person name="Parrish J."/>
            <person name="Pasternak S."/>
            <person name="Patel D."/>
            <person name="Pearce A.V."/>
            <person name="Pearson D.M."/>
            <person name="Pelan S.E."/>
            <person name="Perez L."/>
            <person name="Porter K.M."/>
            <person name="Ramsey Y."/>
            <person name="Reichwald K."/>
            <person name="Rhodes S."/>
            <person name="Ridler K.A."/>
            <person name="Schlessinger D."/>
            <person name="Schueler M.G."/>
            <person name="Sehra H.K."/>
            <person name="Shaw-Smith C."/>
            <person name="Shen H."/>
            <person name="Sheridan E.M."/>
            <person name="Shownkeen R."/>
            <person name="Skuce C.D."/>
            <person name="Smith M.L."/>
            <person name="Sotheran E.C."/>
            <person name="Steingruber H.E."/>
            <person name="Steward C.A."/>
            <person name="Storey R."/>
            <person name="Swann R.M."/>
            <person name="Swarbreck D."/>
            <person name="Tabor P.E."/>
            <person name="Taudien S."/>
            <person name="Taylor T."/>
            <person name="Teague B."/>
            <person name="Thomas K."/>
            <person name="Thorpe A."/>
            <person name="Timms K."/>
            <person name="Tracey A."/>
            <person name="Trevanion S."/>
            <person name="Tromans A.C."/>
            <person name="d'Urso M."/>
            <person name="Verduzco D."/>
            <person name="Villasana D."/>
            <person name="Waldron L."/>
            <person name="Wall M."/>
            <person name="Wang Q."/>
            <person name="Warren J."/>
            <person name="Warry G.L."/>
            <person name="Wei X."/>
            <person name="West A."/>
            <person name="Whitehead S.L."/>
            <person name="Whiteley M.N."/>
            <person name="Wilkinson J.E."/>
            <person name="Willey D.L."/>
            <person name="Williams G."/>
            <person name="Williams L."/>
            <person name="Williamson A."/>
            <person name="Williamson H."/>
            <person name="Wilming L."/>
            <person name="Woodmansey R.L."/>
            <person name="Wray P.W."/>
            <person name="Yen J."/>
            <person name="Zhang J."/>
            <person name="Zhou J."/>
            <person name="Zoghbi H."/>
            <person name="Zorilla S."/>
            <person name="Buck D."/>
            <person name="Reinhardt R."/>
            <person name="Poustka A."/>
            <person name="Rosenthal A."/>
            <person name="Lehrach H."/>
            <person name="Meindl A."/>
            <person name="Minx P.J."/>
            <person name="Hillier L.W."/>
            <person name="Willard H.F."/>
            <person name="Wilson R.K."/>
            <person name="Waterston R.H."/>
            <person name="Rice C.M."/>
            <person name="Vaudin M."/>
            <person name="Coulson A."/>
            <person name="Nelson D.L."/>
            <person name="Weinstock G."/>
            <person name="Sulston J.E."/>
            <person name="Durbin R.M."/>
            <person name="Hubbard T."/>
            <person name="Gibbs R.A."/>
            <person name="Beck S."/>
            <person name="Rogers J."/>
            <person name="Bentley D.R."/>
        </authorList>
    </citation>
    <scope>NUCLEOTIDE SEQUENCE [LARGE SCALE GENOMIC DNA]</scope>
</reference>
<reference key="5">
    <citation type="journal article" date="2004" name="Genome Res.">
        <title>The status, quality, and expansion of the NIH full-length cDNA project: the Mammalian Gene Collection (MGC).</title>
        <authorList>
            <consortium name="The MGC Project Team"/>
        </authorList>
    </citation>
    <scope>NUCLEOTIDE SEQUENCE [LARGE SCALE MRNA] (ISOFORM 1)</scope>
    <source>
        <tissue>Brain</tissue>
        <tissue>Eye</tissue>
    </source>
</reference>
<reference key="6">
    <citation type="journal article" date="2014" name="Mol. Cell. Biochem.">
        <title>EOLA1 protects lipopolysaccharide induced IL-6 production and apoptosis by regulation of MT2A in human umbilical vein endothelial cells.</title>
        <authorList>
            <person name="Liu Y."/>
            <person name="Liu H."/>
            <person name="Chen W."/>
            <person name="Yang T."/>
            <person name="Zhang W."/>
        </authorList>
    </citation>
    <scope>INDUCTION BY LPS</scope>
    <scope>FUNCTION</scope>
</reference>
<reference key="7">
    <citation type="journal article" date="2019" name="Mediators Inflamm.">
        <title>The Reduced Expression of EOLA1 May Be Related to Refractory Diabetic Foot Ulcer.</title>
        <authorList>
            <person name="Wu M."/>
            <person name="Leng W."/>
            <person name="Pan H."/>
            <person name="Lei X."/>
            <person name="Chen L."/>
            <person name="Ouyang X."/>
            <person name="Liang Z."/>
        </authorList>
    </citation>
    <scope>TISSUE SPECIFICITY</scope>
</reference>
<reference evidence="9" key="8">
    <citation type="journal article" date="2019" name="Molecules">
        <title>Crystal Structure of Human EOLA1 Implies Its Possibility of RNA Binding.</title>
        <authorList>
            <person name="Kim M."/>
            <person name="Park S.H."/>
            <person name="Park J.S."/>
            <person name="Kim H.J."/>
            <person name="Han B.W."/>
        </authorList>
    </citation>
    <scope>X-RAY CRYSTALLOGRAPHY (1.71 ANGSTROMS)</scope>
</reference>
<evidence type="ECO:0000255" key="1"/>
<evidence type="ECO:0000269" key="2">
    <source>
    </source>
</evidence>
<evidence type="ECO:0000269" key="3">
    <source>
    </source>
</evidence>
<evidence type="ECO:0000269" key="4">
    <source>
    </source>
</evidence>
<evidence type="ECO:0000303" key="5">
    <source>
    </source>
</evidence>
<evidence type="ECO:0000303" key="6">
    <source>
    </source>
</evidence>
<evidence type="ECO:0000305" key="7"/>
<evidence type="ECO:0000312" key="8">
    <source>
        <dbReference type="HGNC" id="HGNC:28089"/>
    </source>
</evidence>
<evidence type="ECO:0007744" key="9">
    <source>
        <dbReference type="PDB" id="5Y7D"/>
    </source>
</evidence>
<evidence type="ECO:0007829" key="10">
    <source>
        <dbReference type="PDB" id="5Y7D"/>
    </source>
</evidence>